<keyword id="KW-0963">Cytoplasm</keyword>
<sequence>MGKITSIEVQKRNVNRVNVYVDEAFTFACDAELIYKQGIQKDSLIDVEEIKEIVKEDEFIKCKNSALRTVEKTYKTEKELRDKLTEKGFEEDTIKRAIEFLKEYNLLNDEKYAEMYIKDRLRSQGRNKIKYALIRKGVSEDILLDKLSNIDSEDENYTAFKLAEKKYNILKKKESDKYKLSQKLFRFLLSKGYNYDCCNSIVRRLTNNEYME</sequence>
<dbReference type="EMBL" id="CP000312">
    <property type="protein sequence ID" value="ABG86168.1"/>
    <property type="molecule type" value="Genomic_DNA"/>
</dbReference>
<dbReference type="RefSeq" id="WP_011592770.1">
    <property type="nucleotide sequence ID" value="NC_008262.1"/>
</dbReference>
<dbReference type="SMR" id="Q0SRQ8"/>
<dbReference type="KEGG" id="cpr:CPR_1889"/>
<dbReference type="Proteomes" id="UP000001824">
    <property type="component" value="Chromosome"/>
</dbReference>
<dbReference type="GO" id="GO:0005737">
    <property type="term" value="C:cytoplasm"/>
    <property type="evidence" value="ECO:0007669"/>
    <property type="project" value="UniProtKB-SubCell"/>
</dbReference>
<dbReference type="GO" id="GO:0006282">
    <property type="term" value="P:regulation of DNA repair"/>
    <property type="evidence" value="ECO:0007669"/>
    <property type="project" value="UniProtKB-UniRule"/>
</dbReference>
<dbReference type="Gene3D" id="1.10.10.10">
    <property type="entry name" value="Winged helix-like DNA-binding domain superfamily/Winged helix DNA-binding domain"/>
    <property type="match status" value="3"/>
</dbReference>
<dbReference type="HAMAP" id="MF_01114">
    <property type="entry name" value="RecX"/>
    <property type="match status" value="1"/>
</dbReference>
<dbReference type="InterPro" id="IPR053926">
    <property type="entry name" value="RecX_HTH_1st"/>
</dbReference>
<dbReference type="InterPro" id="IPR053924">
    <property type="entry name" value="RecX_HTH_2nd"/>
</dbReference>
<dbReference type="InterPro" id="IPR053925">
    <property type="entry name" value="RecX_HTH_3rd"/>
</dbReference>
<dbReference type="InterPro" id="IPR003783">
    <property type="entry name" value="Regulatory_RecX"/>
</dbReference>
<dbReference type="InterPro" id="IPR036388">
    <property type="entry name" value="WH-like_DNA-bd_sf"/>
</dbReference>
<dbReference type="NCBIfam" id="NF001058">
    <property type="entry name" value="PRK00117.4-1"/>
    <property type="match status" value="1"/>
</dbReference>
<dbReference type="PANTHER" id="PTHR33602">
    <property type="entry name" value="REGULATORY PROTEIN RECX FAMILY PROTEIN"/>
    <property type="match status" value="1"/>
</dbReference>
<dbReference type="PANTHER" id="PTHR33602:SF1">
    <property type="entry name" value="REGULATORY PROTEIN RECX FAMILY PROTEIN"/>
    <property type="match status" value="1"/>
</dbReference>
<dbReference type="Pfam" id="PF21982">
    <property type="entry name" value="RecX_HTH1"/>
    <property type="match status" value="1"/>
</dbReference>
<dbReference type="Pfam" id="PF02631">
    <property type="entry name" value="RecX_HTH2"/>
    <property type="match status" value="1"/>
</dbReference>
<dbReference type="Pfam" id="PF21981">
    <property type="entry name" value="RecX_HTH3"/>
    <property type="match status" value="1"/>
</dbReference>
<feature type="chain" id="PRO_1000065164" description="Regulatory protein RecX">
    <location>
        <begin position="1"/>
        <end position="212"/>
    </location>
</feature>
<gene>
    <name evidence="1" type="primary">recX</name>
    <name type="ordered locus">CPR_1889</name>
</gene>
<reference key="1">
    <citation type="journal article" date="2006" name="Genome Res.">
        <title>Skewed genomic variability in strains of the toxigenic bacterial pathogen, Clostridium perfringens.</title>
        <authorList>
            <person name="Myers G.S.A."/>
            <person name="Rasko D.A."/>
            <person name="Cheung J.K."/>
            <person name="Ravel J."/>
            <person name="Seshadri R."/>
            <person name="DeBoy R.T."/>
            <person name="Ren Q."/>
            <person name="Varga J."/>
            <person name="Awad M.M."/>
            <person name="Brinkac L.M."/>
            <person name="Daugherty S.C."/>
            <person name="Haft D.H."/>
            <person name="Dodson R.J."/>
            <person name="Madupu R."/>
            <person name="Nelson W.C."/>
            <person name="Rosovitz M.J."/>
            <person name="Sullivan S.A."/>
            <person name="Khouri H."/>
            <person name="Dimitrov G.I."/>
            <person name="Watkins K.L."/>
            <person name="Mulligan S."/>
            <person name="Benton J."/>
            <person name="Radune D."/>
            <person name="Fisher D.J."/>
            <person name="Atkins H.S."/>
            <person name="Hiscox T."/>
            <person name="Jost B.H."/>
            <person name="Billington S.J."/>
            <person name="Songer J.G."/>
            <person name="McClane B.A."/>
            <person name="Titball R.W."/>
            <person name="Rood J.I."/>
            <person name="Melville S.B."/>
            <person name="Paulsen I.T."/>
        </authorList>
    </citation>
    <scope>NUCLEOTIDE SEQUENCE [LARGE SCALE GENOMIC DNA]</scope>
    <source>
        <strain>SM101 / Type A</strain>
    </source>
</reference>
<accession>Q0SRQ8</accession>
<proteinExistence type="inferred from homology"/>
<comment type="function">
    <text evidence="1">Modulates RecA activity.</text>
</comment>
<comment type="subcellular location">
    <subcellularLocation>
        <location evidence="1">Cytoplasm</location>
    </subcellularLocation>
</comment>
<comment type="similarity">
    <text evidence="1">Belongs to the RecX family.</text>
</comment>
<name>RECX_CLOPS</name>
<evidence type="ECO:0000255" key="1">
    <source>
        <dbReference type="HAMAP-Rule" id="MF_01114"/>
    </source>
</evidence>
<organism>
    <name type="scientific">Clostridium perfringens (strain SM101 / Type A)</name>
    <dbReference type="NCBI Taxonomy" id="289380"/>
    <lineage>
        <taxon>Bacteria</taxon>
        <taxon>Bacillati</taxon>
        <taxon>Bacillota</taxon>
        <taxon>Clostridia</taxon>
        <taxon>Eubacteriales</taxon>
        <taxon>Clostridiaceae</taxon>
        <taxon>Clostridium</taxon>
    </lineage>
</organism>
<protein>
    <recommendedName>
        <fullName evidence="1">Regulatory protein RecX</fullName>
    </recommendedName>
</protein>